<evidence type="ECO:0000255" key="1">
    <source>
        <dbReference type="HAMAP-Rule" id="MF_03119"/>
    </source>
</evidence>
<sequence length="403" mass="43601">MSLQAIQFQRGDKSQVSVRVLDQLLLPYVSRYIPIQTVDDGFAVIRSMQVRGAPAIAIVGVLSVLVECQLLCNEDFVAVQAFYDLSSYAAFGRTMRMRLAHLLGSRPTAVNLSHALRDVERLLDSATSLSQFRDRMYDYACELLDMDVANNVRMGDNGARFLLDALIAEGFDGSFAVLTICNTGSLATAGYGTALGAIRSLWQHAEAGLTAPKKQKASACAPRMTHVFPLETRPYNQGSRLTAYELLHDAIPATLITDSSVAYRIQTSPVPIKAAFVGADRIARNGDTANKIGTLQLALVCRHFGIRFFVVAPRSTVDGTTAAGTDIPVEERCPDEFRVVTGAAAGATGDPTTASVAIAPRDMPVWNPAFDVTPHAYIDAIVTETRVFTKDAAGNFDLDELFT</sequence>
<accession>Q75EI1</accession>
<reference key="1">
    <citation type="journal article" date="2004" name="Science">
        <title>The Ashbya gossypii genome as a tool for mapping the ancient Saccharomyces cerevisiae genome.</title>
        <authorList>
            <person name="Dietrich F.S."/>
            <person name="Voegeli S."/>
            <person name="Brachat S."/>
            <person name="Lerch A."/>
            <person name="Gates K."/>
            <person name="Steiner S."/>
            <person name="Mohr C."/>
            <person name="Poehlmann R."/>
            <person name="Luedi P."/>
            <person name="Choi S."/>
            <person name="Wing R.A."/>
            <person name="Flavier A."/>
            <person name="Gaffney T.D."/>
            <person name="Philippsen P."/>
        </authorList>
    </citation>
    <scope>NUCLEOTIDE SEQUENCE [LARGE SCALE GENOMIC DNA]</scope>
    <source>
        <strain>ATCC 10895 / CBS 109.51 / FGSC 9923 / NRRL Y-1056</strain>
    </source>
</reference>
<reference key="2">
    <citation type="journal article" date="2013" name="G3 (Bethesda)">
        <title>Genomes of Ashbya fungi isolated from insects reveal four mating-type loci, numerous translocations, lack of transposons, and distinct gene duplications.</title>
        <authorList>
            <person name="Dietrich F.S."/>
            <person name="Voegeli S."/>
            <person name="Kuo S."/>
            <person name="Philippsen P."/>
        </authorList>
    </citation>
    <scope>GENOME REANNOTATION</scope>
    <source>
        <strain>ATCC 10895 / CBS 109.51 / FGSC 9923 / NRRL Y-1056</strain>
    </source>
</reference>
<comment type="function">
    <text evidence="1">Catalyzes the interconversion of methylthioribose-1-phosphate (MTR-1-P) into methylthioribulose-1-phosphate (MTRu-1-P).</text>
</comment>
<comment type="catalytic activity">
    <reaction evidence="1">
        <text>5-(methylsulfanyl)-alpha-D-ribose 1-phosphate = 5-(methylsulfanyl)-D-ribulose 1-phosphate</text>
        <dbReference type="Rhea" id="RHEA:19989"/>
        <dbReference type="ChEBI" id="CHEBI:58533"/>
        <dbReference type="ChEBI" id="CHEBI:58548"/>
        <dbReference type="EC" id="5.3.1.23"/>
    </reaction>
</comment>
<comment type="pathway">
    <text evidence="1">Amino-acid biosynthesis; L-methionine biosynthesis via salvage pathway; L-methionine from S-methyl-5-thio-alpha-D-ribose 1-phosphate: step 1/6.</text>
</comment>
<comment type="subcellular location">
    <subcellularLocation>
        <location evidence="1">Cytoplasm</location>
    </subcellularLocation>
    <subcellularLocation>
        <location evidence="1">Nucleus</location>
    </subcellularLocation>
</comment>
<comment type="similarity">
    <text evidence="1">Belongs to the eIF-2B alpha/beta/delta subunits family. MtnA subfamily.</text>
</comment>
<protein>
    <recommendedName>
        <fullName evidence="1">Methylthioribose-1-phosphate isomerase</fullName>
        <shortName evidence="1">M1Pi</shortName>
        <shortName evidence="1">MTR-1-P isomerase</shortName>
        <ecNumber evidence="1">5.3.1.23</ecNumber>
    </recommendedName>
    <alternativeName>
        <fullName evidence="1">S-methyl-5-thioribose-1-phosphate isomerase</fullName>
    </alternativeName>
    <alternativeName>
        <fullName evidence="1">Translation initiation factor eIF-2B subunit alpha/beta/delta-like protein</fullName>
    </alternativeName>
</protein>
<dbReference type="EC" id="5.3.1.23" evidence="1"/>
<dbReference type="EMBL" id="AE016814">
    <property type="protein sequence ID" value="AAS50463.1"/>
    <property type="molecule type" value="Genomic_DNA"/>
</dbReference>
<dbReference type="RefSeq" id="NP_982639.1">
    <property type="nucleotide sequence ID" value="NM_207992.1"/>
</dbReference>
<dbReference type="SMR" id="Q75EI1"/>
<dbReference type="FunCoup" id="Q75EI1">
    <property type="interactions" value="745"/>
</dbReference>
<dbReference type="STRING" id="284811.Q75EI1"/>
<dbReference type="EnsemblFungi" id="AAS50463">
    <property type="protein sequence ID" value="AAS50463"/>
    <property type="gene ID" value="AGOS_AAR098W"/>
</dbReference>
<dbReference type="GeneID" id="4618528"/>
<dbReference type="KEGG" id="ago:AGOS_AAR098W"/>
<dbReference type="eggNOG" id="KOG1468">
    <property type="taxonomic scope" value="Eukaryota"/>
</dbReference>
<dbReference type="HOGENOM" id="CLU_016218_1_3_1"/>
<dbReference type="InParanoid" id="Q75EI1"/>
<dbReference type="OMA" id="CETRPLN"/>
<dbReference type="OrthoDB" id="2461at2759"/>
<dbReference type="UniPathway" id="UPA00904">
    <property type="reaction ID" value="UER00874"/>
</dbReference>
<dbReference type="Proteomes" id="UP000000591">
    <property type="component" value="Chromosome I"/>
</dbReference>
<dbReference type="GO" id="GO:0005737">
    <property type="term" value="C:cytoplasm"/>
    <property type="evidence" value="ECO:0007669"/>
    <property type="project" value="UniProtKB-SubCell"/>
</dbReference>
<dbReference type="GO" id="GO:0005634">
    <property type="term" value="C:nucleus"/>
    <property type="evidence" value="ECO:0007669"/>
    <property type="project" value="UniProtKB-SubCell"/>
</dbReference>
<dbReference type="GO" id="GO:0046523">
    <property type="term" value="F:S-methyl-5-thioribose-1-phosphate isomerase activity"/>
    <property type="evidence" value="ECO:0000318"/>
    <property type="project" value="GO_Central"/>
</dbReference>
<dbReference type="GO" id="GO:0019509">
    <property type="term" value="P:L-methionine salvage from methylthioadenosine"/>
    <property type="evidence" value="ECO:0000318"/>
    <property type="project" value="GO_Central"/>
</dbReference>
<dbReference type="FunFam" id="1.20.120.420:FF:000006">
    <property type="entry name" value="Methylthioribose-1-phosphate isomerase"/>
    <property type="match status" value="1"/>
</dbReference>
<dbReference type="FunFam" id="3.40.50.10470:FF:000006">
    <property type="entry name" value="Methylthioribose-1-phosphate isomerase"/>
    <property type="match status" value="1"/>
</dbReference>
<dbReference type="Gene3D" id="1.20.120.420">
    <property type="entry name" value="translation initiation factor eif-2b, domain 1"/>
    <property type="match status" value="1"/>
</dbReference>
<dbReference type="Gene3D" id="3.40.50.10470">
    <property type="entry name" value="Translation initiation factor eif-2b, domain 2"/>
    <property type="match status" value="1"/>
</dbReference>
<dbReference type="HAMAP" id="MF_01678">
    <property type="entry name" value="Salvage_MtnA"/>
    <property type="match status" value="1"/>
</dbReference>
<dbReference type="InterPro" id="IPR000649">
    <property type="entry name" value="IF-2B-related"/>
</dbReference>
<dbReference type="InterPro" id="IPR005251">
    <property type="entry name" value="IF-M1Pi"/>
</dbReference>
<dbReference type="InterPro" id="IPR042529">
    <property type="entry name" value="IF_2B-like_C"/>
</dbReference>
<dbReference type="InterPro" id="IPR011559">
    <property type="entry name" value="Initiation_fac_2B_a/b/d"/>
</dbReference>
<dbReference type="InterPro" id="IPR027363">
    <property type="entry name" value="M1Pi_N"/>
</dbReference>
<dbReference type="InterPro" id="IPR037171">
    <property type="entry name" value="NagB/RpiA_transferase-like"/>
</dbReference>
<dbReference type="NCBIfam" id="TIGR00524">
    <property type="entry name" value="eIF-2B_rel"/>
    <property type="match status" value="1"/>
</dbReference>
<dbReference type="NCBIfam" id="NF004326">
    <property type="entry name" value="PRK05720.1"/>
    <property type="match status" value="1"/>
</dbReference>
<dbReference type="NCBIfam" id="TIGR00512">
    <property type="entry name" value="salvage_mtnA"/>
    <property type="match status" value="1"/>
</dbReference>
<dbReference type="PANTHER" id="PTHR43475">
    <property type="entry name" value="METHYLTHIORIBOSE-1-PHOSPHATE ISOMERASE"/>
    <property type="match status" value="1"/>
</dbReference>
<dbReference type="PANTHER" id="PTHR43475:SF1">
    <property type="entry name" value="METHYLTHIORIBOSE-1-PHOSPHATE ISOMERASE"/>
    <property type="match status" value="1"/>
</dbReference>
<dbReference type="Pfam" id="PF01008">
    <property type="entry name" value="IF-2B"/>
    <property type="match status" value="1"/>
</dbReference>
<dbReference type="SUPFAM" id="SSF100950">
    <property type="entry name" value="NagB/RpiA/CoA transferase-like"/>
    <property type="match status" value="1"/>
</dbReference>
<gene>
    <name evidence="1" type="primary">MRI1</name>
    <name type="ordered locus">AAR098W</name>
</gene>
<organism>
    <name type="scientific">Eremothecium gossypii (strain ATCC 10895 / CBS 109.51 / FGSC 9923 / NRRL Y-1056)</name>
    <name type="common">Yeast</name>
    <name type="synonym">Ashbya gossypii</name>
    <dbReference type="NCBI Taxonomy" id="284811"/>
    <lineage>
        <taxon>Eukaryota</taxon>
        <taxon>Fungi</taxon>
        <taxon>Dikarya</taxon>
        <taxon>Ascomycota</taxon>
        <taxon>Saccharomycotina</taxon>
        <taxon>Saccharomycetes</taxon>
        <taxon>Saccharomycetales</taxon>
        <taxon>Saccharomycetaceae</taxon>
        <taxon>Eremothecium</taxon>
    </lineage>
</organism>
<name>MTNA_EREGS</name>
<keyword id="KW-0028">Amino-acid biosynthesis</keyword>
<keyword id="KW-0963">Cytoplasm</keyword>
<keyword id="KW-0413">Isomerase</keyword>
<keyword id="KW-0486">Methionine biosynthesis</keyword>
<keyword id="KW-0539">Nucleus</keyword>
<keyword id="KW-1185">Reference proteome</keyword>
<proteinExistence type="inferred from homology"/>
<feature type="chain" id="PRO_0000402011" description="Methylthioribose-1-phosphate isomerase">
    <location>
        <begin position="1"/>
        <end position="403"/>
    </location>
</feature>
<feature type="active site" description="Proton donor" evidence="1">
    <location>
        <position position="280"/>
    </location>
</feature>
<feature type="site" description="Transition state stabilizer" evidence="1">
    <location>
        <position position="181"/>
    </location>
</feature>